<sequence>MEKLNQTNLLLRFTLEIAALISLGVYAWISFNGYFKYVLTLVLPIAVMIVWSVFAVPHDPSRSGQTVIAVNGVTRLVIELLIFAMAVAALYFSYLKPVSIVFLCLIILHYIISAERIKWLLNQ</sequence>
<name>YRDB_BACSU</name>
<reference key="1">
    <citation type="journal article" date="1997" name="Microbiology">
        <title>Sequence of the Bacillus subtilis genome region in the vicinity of the lev operon reveals two new extracytoplasmic function RNA polymerase sigma factors SigV and SigZ.</title>
        <authorList>
            <person name="Sorokin A."/>
            <person name="Bolotin A."/>
            <person name="Purnelle B."/>
            <person name="Hilbert H."/>
            <person name="Lauber J."/>
            <person name="Duesterhoeft A."/>
            <person name="Ehrlich S.D."/>
        </authorList>
    </citation>
    <scope>NUCLEOTIDE SEQUENCE [GENOMIC DNA]</scope>
    <source>
        <strain>168</strain>
    </source>
</reference>
<reference key="2">
    <citation type="journal article" date="1997" name="Nature">
        <title>The complete genome sequence of the Gram-positive bacterium Bacillus subtilis.</title>
        <authorList>
            <person name="Kunst F."/>
            <person name="Ogasawara N."/>
            <person name="Moszer I."/>
            <person name="Albertini A.M."/>
            <person name="Alloni G."/>
            <person name="Azevedo V."/>
            <person name="Bertero M.G."/>
            <person name="Bessieres P."/>
            <person name="Bolotin A."/>
            <person name="Borchert S."/>
            <person name="Borriss R."/>
            <person name="Boursier L."/>
            <person name="Brans A."/>
            <person name="Braun M."/>
            <person name="Brignell S.C."/>
            <person name="Bron S."/>
            <person name="Brouillet S."/>
            <person name="Bruschi C.V."/>
            <person name="Caldwell B."/>
            <person name="Capuano V."/>
            <person name="Carter N.M."/>
            <person name="Choi S.-K."/>
            <person name="Codani J.-J."/>
            <person name="Connerton I.F."/>
            <person name="Cummings N.J."/>
            <person name="Daniel R.A."/>
            <person name="Denizot F."/>
            <person name="Devine K.M."/>
            <person name="Duesterhoeft A."/>
            <person name="Ehrlich S.D."/>
            <person name="Emmerson P.T."/>
            <person name="Entian K.-D."/>
            <person name="Errington J."/>
            <person name="Fabret C."/>
            <person name="Ferrari E."/>
            <person name="Foulger D."/>
            <person name="Fritz C."/>
            <person name="Fujita M."/>
            <person name="Fujita Y."/>
            <person name="Fuma S."/>
            <person name="Galizzi A."/>
            <person name="Galleron N."/>
            <person name="Ghim S.-Y."/>
            <person name="Glaser P."/>
            <person name="Goffeau A."/>
            <person name="Golightly E.J."/>
            <person name="Grandi G."/>
            <person name="Guiseppi G."/>
            <person name="Guy B.J."/>
            <person name="Haga K."/>
            <person name="Haiech J."/>
            <person name="Harwood C.R."/>
            <person name="Henaut A."/>
            <person name="Hilbert H."/>
            <person name="Holsappel S."/>
            <person name="Hosono S."/>
            <person name="Hullo M.-F."/>
            <person name="Itaya M."/>
            <person name="Jones L.-M."/>
            <person name="Joris B."/>
            <person name="Karamata D."/>
            <person name="Kasahara Y."/>
            <person name="Klaerr-Blanchard M."/>
            <person name="Klein C."/>
            <person name="Kobayashi Y."/>
            <person name="Koetter P."/>
            <person name="Koningstein G."/>
            <person name="Krogh S."/>
            <person name="Kumano M."/>
            <person name="Kurita K."/>
            <person name="Lapidus A."/>
            <person name="Lardinois S."/>
            <person name="Lauber J."/>
            <person name="Lazarevic V."/>
            <person name="Lee S.-M."/>
            <person name="Levine A."/>
            <person name="Liu H."/>
            <person name="Masuda S."/>
            <person name="Mauel C."/>
            <person name="Medigue C."/>
            <person name="Medina N."/>
            <person name="Mellado R.P."/>
            <person name="Mizuno M."/>
            <person name="Moestl D."/>
            <person name="Nakai S."/>
            <person name="Noback M."/>
            <person name="Noone D."/>
            <person name="O'Reilly M."/>
            <person name="Ogawa K."/>
            <person name="Ogiwara A."/>
            <person name="Oudega B."/>
            <person name="Park S.-H."/>
            <person name="Parro V."/>
            <person name="Pohl T.M."/>
            <person name="Portetelle D."/>
            <person name="Porwollik S."/>
            <person name="Prescott A.M."/>
            <person name="Presecan E."/>
            <person name="Pujic P."/>
            <person name="Purnelle B."/>
            <person name="Rapoport G."/>
            <person name="Rey M."/>
            <person name="Reynolds S."/>
            <person name="Rieger M."/>
            <person name="Rivolta C."/>
            <person name="Rocha E."/>
            <person name="Roche B."/>
            <person name="Rose M."/>
            <person name="Sadaie Y."/>
            <person name="Sato T."/>
            <person name="Scanlan E."/>
            <person name="Schleich S."/>
            <person name="Schroeter R."/>
            <person name="Scoffone F."/>
            <person name="Sekiguchi J."/>
            <person name="Sekowska A."/>
            <person name="Seror S.J."/>
            <person name="Serror P."/>
            <person name="Shin B.-S."/>
            <person name="Soldo B."/>
            <person name="Sorokin A."/>
            <person name="Tacconi E."/>
            <person name="Takagi T."/>
            <person name="Takahashi H."/>
            <person name="Takemaru K."/>
            <person name="Takeuchi M."/>
            <person name="Tamakoshi A."/>
            <person name="Tanaka T."/>
            <person name="Terpstra P."/>
            <person name="Tognoni A."/>
            <person name="Tosato V."/>
            <person name="Uchiyama S."/>
            <person name="Vandenbol M."/>
            <person name="Vannier F."/>
            <person name="Vassarotti A."/>
            <person name="Viari A."/>
            <person name="Wambutt R."/>
            <person name="Wedler E."/>
            <person name="Wedler H."/>
            <person name="Weitzenegger T."/>
            <person name="Winters P."/>
            <person name="Wipat A."/>
            <person name="Yamamoto H."/>
            <person name="Yamane K."/>
            <person name="Yasumoto K."/>
            <person name="Yata K."/>
            <person name="Yoshida K."/>
            <person name="Yoshikawa H.-F."/>
            <person name="Zumstein E."/>
            <person name="Yoshikawa H."/>
            <person name="Danchin A."/>
        </authorList>
    </citation>
    <scope>NUCLEOTIDE SEQUENCE [LARGE SCALE GENOMIC DNA]</scope>
    <source>
        <strain>168</strain>
    </source>
</reference>
<accession>O07080</accession>
<proteinExistence type="predicted"/>
<organism>
    <name type="scientific">Bacillus subtilis (strain 168)</name>
    <dbReference type="NCBI Taxonomy" id="224308"/>
    <lineage>
        <taxon>Bacteria</taxon>
        <taxon>Bacillati</taxon>
        <taxon>Bacillota</taxon>
        <taxon>Bacilli</taxon>
        <taxon>Bacillales</taxon>
        <taxon>Bacillaceae</taxon>
        <taxon>Bacillus</taxon>
    </lineage>
</organism>
<evidence type="ECO:0000255" key="1"/>
<evidence type="ECO:0000305" key="2"/>
<dbReference type="EMBL" id="U93876">
    <property type="protein sequence ID" value="AAB80895.1"/>
    <property type="molecule type" value="Genomic_DNA"/>
</dbReference>
<dbReference type="EMBL" id="AL009126">
    <property type="protein sequence ID" value="CAB14618.1"/>
    <property type="molecule type" value="Genomic_DNA"/>
</dbReference>
<dbReference type="PIR" id="H69972">
    <property type="entry name" value="H69972"/>
</dbReference>
<dbReference type="RefSeq" id="NP_390554.1">
    <property type="nucleotide sequence ID" value="NC_000964.3"/>
</dbReference>
<dbReference type="RefSeq" id="WP_010886579.1">
    <property type="nucleotide sequence ID" value="NZ_OZ025638.1"/>
</dbReference>
<dbReference type="FunCoup" id="O07080">
    <property type="interactions" value="73"/>
</dbReference>
<dbReference type="PaxDb" id="224308-BSU26770"/>
<dbReference type="EnsemblBacteria" id="CAB14618">
    <property type="protein sequence ID" value="CAB14618"/>
    <property type="gene ID" value="BSU_26770"/>
</dbReference>
<dbReference type="GeneID" id="936140"/>
<dbReference type="KEGG" id="bsu:BSU26770"/>
<dbReference type="eggNOG" id="ENOG50336ZS">
    <property type="taxonomic scope" value="Bacteria"/>
</dbReference>
<dbReference type="InParanoid" id="O07080"/>
<dbReference type="OrthoDB" id="4557830at2"/>
<dbReference type="BioCyc" id="BSUB:BSU26770-MONOMER"/>
<dbReference type="Proteomes" id="UP000001570">
    <property type="component" value="Chromosome"/>
</dbReference>
<dbReference type="GO" id="GO:0005886">
    <property type="term" value="C:plasma membrane"/>
    <property type="evidence" value="ECO:0007669"/>
    <property type="project" value="UniProtKB-SubCell"/>
</dbReference>
<dbReference type="InterPro" id="IPR021214">
    <property type="entry name" value="DUF2568"/>
</dbReference>
<dbReference type="Pfam" id="PF10823">
    <property type="entry name" value="DUF2568"/>
    <property type="match status" value="1"/>
</dbReference>
<keyword id="KW-1003">Cell membrane</keyword>
<keyword id="KW-0472">Membrane</keyword>
<keyword id="KW-1185">Reference proteome</keyword>
<keyword id="KW-0812">Transmembrane</keyword>
<keyword id="KW-1133">Transmembrane helix</keyword>
<gene>
    <name type="primary">yrdB</name>
    <name type="ordered locus">BSU26770</name>
</gene>
<protein>
    <recommendedName>
        <fullName>Uncharacterized protein YrdB</fullName>
    </recommendedName>
</protein>
<comment type="subcellular location">
    <subcellularLocation>
        <location evidence="2">Cell membrane</location>
        <topology evidence="2">Multi-pass membrane protein</topology>
    </subcellularLocation>
</comment>
<comment type="similarity">
    <text evidence="2">To E.coli YhgE.</text>
</comment>
<feature type="chain" id="PRO_0000049861" description="Uncharacterized protein YrdB">
    <location>
        <begin position="1"/>
        <end position="123"/>
    </location>
</feature>
<feature type="transmembrane region" description="Helical" evidence="1">
    <location>
        <begin position="9"/>
        <end position="31"/>
    </location>
</feature>
<feature type="transmembrane region" description="Helical" evidence="1">
    <location>
        <begin position="38"/>
        <end position="56"/>
    </location>
</feature>
<feature type="transmembrane region" description="Helical" evidence="1">
    <location>
        <begin position="67"/>
        <end position="91"/>
    </location>
</feature>
<feature type="transmembrane region" description="Helical" evidence="1">
    <location>
        <begin position="98"/>
        <end position="114"/>
    </location>
</feature>